<organism>
    <name type="scientific">Geobacillus thermodenitrificans (strain NG80-2)</name>
    <dbReference type="NCBI Taxonomy" id="420246"/>
    <lineage>
        <taxon>Bacteria</taxon>
        <taxon>Bacillati</taxon>
        <taxon>Bacillota</taxon>
        <taxon>Bacilli</taxon>
        <taxon>Bacillales</taxon>
        <taxon>Anoxybacillaceae</taxon>
        <taxon>Geobacillus</taxon>
    </lineage>
</organism>
<proteinExistence type="inferred from homology"/>
<dbReference type="EMBL" id="CP000557">
    <property type="protein sequence ID" value="ABO67889.1"/>
    <property type="molecule type" value="Genomic_DNA"/>
</dbReference>
<dbReference type="SMR" id="A4IRD5"/>
<dbReference type="KEGG" id="gtn:GTNG_2544"/>
<dbReference type="eggNOG" id="COG0850">
    <property type="taxonomic scope" value="Bacteria"/>
</dbReference>
<dbReference type="HOGENOM" id="CLU_048711_1_1_9"/>
<dbReference type="Proteomes" id="UP000001578">
    <property type="component" value="Chromosome"/>
</dbReference>
<dbReference type="GO" id="GO:0000902">
    <property type="term" value="P:cell morphogenesis"/>
    <property type="evidence" value="ECO:0007669"/>
    <property type="project" value="InterPro"/>
</dbReference>
<dbReference type="GO" id="GO:0000917">
    <property type="term" value="P:division septum assembly"/>
    <property type="evidence" value="ECO:0007669"/>
    <property type="project" value="UniProtKB-KW"/>
</dbReference>
<dbReference type="GO" id="GO:1901891">
    <property type="term" value="P:regulation of cell septum assembly"/>
    <property type="evidence" value="ECO:0007669"/>
    <property type="project" value="InterPro"/>
</dbReference>
<dbReference type="FunFam" id="2.160.20.70:FF:000003">
    <property type="entry name" value="Probable septum site-determining protein MinC"/>
    <property type="match status" value="1"/>
</dbReference>
<dbReference type="Gene3D" id="2.160.20.70">
    <property type="match status" value="1"/>
</dbReference>
<dbReference type="Gene3D" id="3.30.160.540">
    <property type="match status" value="1"/>
</dbReference>
<dbReference type="HAMAP" id="MF_00267">
    <property type="entry name" value="MinC"/>
    <property type="match status" value="1"/>
</dbReference>
<dbReference type="InterPro" id="IPR016098">
    <property type="entry name" value="CAP/MinC_C"/>
</dbReference>
<dbReference type="InterPro" id="IPR013033">
    <property type="entry name" value="MinC"/>
</dbReference>
<dbReference type="InterPro" id="IPR036145">
    <property type="entry name" value="MinC_C_sf"/>
</dbReference>
<dbReference type="InterPro" id="IPR055219">
    <property type="entry name" value="MinC_N_1"/>
</dbReference>
<dbReference type="InterPro" id="IPR005526">
    <property type="entry name" value="Septum_form_inhib_MinC_C"/>
</dbReference>
<dbReference type="NCBIfam" id="TIGR01222">
    <property type="entry name" value="minC"/>
    <property type="match status" value="1"/>
</dbReference>
<dbReference type="PANTHER" id="PTHR34108">
    <property type="entry name" value="SEPTUM SITE-DETERMINING PROTEIN MINC"/>
    <property type="match status" value="1"/>
</dbReference>
<dbReference type="PANTHER" id="PTHR34108:SF1">
    <property type="entry name" value="SEPTUM SITE-DETERMINING PROTEIN MINC"/>
    <property type="match status" value="1"/>
</dbReference>
<dbReference type="Pfam" id="PF03775">
    <property type="entry name" value="MinC_C"/>
    <property type="match status" value="1"/>
</dbReference>
<dbReference type="Pfam" id="PF22642">
    <property type="entry name" value="MinC_N_1"/>
    <property type="match status" value="1"/>
</dbReference>
<dbReference type="SUPFAM" id="SSF63848">
    <property type="entry name" value="Cell-division inhibitor MinC, C-terminal domain"/>
    <property type="match status" value="1"/>
</dbReference>
<keyword id="KW-0131">Cell cycle</keyword>
<keyword id="KW-0132">Cell division</keyword>
<keyword id="KW-0717">Septation</keyword>
<gene>
    <name evidence="1" type="primary">minC</name>
    <name type="ordered locus">GTNG_2544</name>
</gene>
<reference key="1">
    <citation type="journal article" date="2007" name="Proc. Natl. Acad. Sci. U.S.A.">
        <title>Genome and proteome of long-chain alkane degrading Geobacillus thermodenitrificans NG80-2 isolated from a deep-subsurface oil reservoir.</title>
        <authorList>
            <person name="Feng L."/>
            <person name="Wang W."/>
            <person name="Cheng J."/>
            <person name="Ren Y."/>
            <person name="Zhao G."/>
            <person name="Gao C."/>
            <person name="Tang Y."/>
            <person name="Liu X."/>
            <person name="Han W."/>
            <person name="Peng X."/>
            <person name="Liu R."/>
            <person name="Wang L."/>
        </authorList>
    </citation>
    <scope>NUCLEOTIDE SEQUENCE [LARGE SCALE GENOMIC DNA]</scope>
    <source>
        <strain>NG80-2</strain>
    </source>
</reference>
<feature type="chain" id="PRO_1000047832" description="Probable septum site-determining protein MinC">
    <location>
        <begin position="1"/>
        <end position="227"/>
    </location>
</feature>
<name>MINC_GEOTN</name>
<comment type="function">
    <text evidence="1">Cell division inhibitor that blocks the formation of polar Z ring septums. Rapidly oscillates between the poles of the cell to destabilize FtsZ filaments that have formed before they mature into polar Z rings. Prevents FtsZ polymerization.</text>
</comment>
<comment type="subunit">
    <text evidence="1">Interacts with MinD and FtsZ.</text>
</comment>
<comment type="similarity">
    <text evidence="1">Belongs to the MinC family.</text>
</comment>
<evidence type="ECO:0000255" key="1">
    <source>
        <dbReference type="HAMAP-Rule" id="MF_00267"/>
    </source>
</evidence>
<protein>
    <recommendedName>
        <fullName evidence="1">Probable septum site-determining protein MinC</fullName>
    </recommendedName>
</protein>
<sequence>MAKQKQQYVTIKGTKDGLTLYLDDRCSYDDLMKEIEERLVKRSSVAANSPLVSVHLKVGNRYLTPAQEEELRALIRRSKNLVVDSIESNVISKAEAIEWVQKTEIVTVSRIVRSGQVLHVEGDLLLLGDVNPGGTVIAGGNIFILGALRGIAHAGYAGNKEAIIAASVMKPMQLRIGDVMNRAPDYKTDERNEMECAYINEHNQIVVDRLQLLMHLRPNLTRLERRM</sequence>
<accession>A4IRD5</accession>